<proteinExistence type="evidence at protein level"/>
<keyword id="KW-1003">Cell membrane</keyword>
<keyword id="KW-0134">Cell wall</keyword>
<keyword id="KW-0472">Membrane</keyword>
<keyword id="KW-1185">Reference proteome</keyword>
<keyword id="KW-0964">Secreted</keyword>
<keyword id="KW-0732">Signal</keyword>
<keyword id="KW-0843">Virulence</keyword>
<organism>
    <name type="scientific">Mycobacterium tuberculosis (strain ATCC 25618 / H37Rv)</name>
    <dbReference type="NCBI Taxonomy" id="83332"/>
    <lineage>
        <taxon>Bacteria</taxon>
        <taxon>Bacillati</taxon>
        <taxon>Actinomycetota</taxon>
        <taxon>Actinomycetes</taxon>
        <taxon>Mycobacteriales</taxon>
        <taxon>Mycobacteriaceae</taxon>
        <taxon>Mycobacterium</taxon>
        <taxon>Mycobacterium tuberculosis complex</taxon>
    </lineage>
</organism>
<protein>
    <recommendedName>
        <fullName evidence="10">Cellulose/chitin binding protein Rv1987</fullName>
    </recommendedName>
    <alternativeName>
        <fullName evidence="10">Carbohydrate binding protein</fullName>
        <shortName evidence="10">CBP</shortName>
    </alternativeName>
</protein>
<sequence length="142" mass="14919">MAGLNIYVRRWRTALHATVSALIVAILGLAITPVASAATARATLSVTSTWQTGFIARFTITNSSTAPLTDWKLEFDLPAGESVLHTWNSTVARSGTHYVLSPANWNRIIAPGGSATGGLRGGLTGSYSPPSSCLLNGQYPCT</sequence>
<dbReference type="EMBL" id="AL123456">
    <property type="protein sequence ID" value="CCP44757.1"/>
    <property type="molecule type" value="Genomic_DNA"/>
</dbReference>
<dbReference type="PIR" id="A70757">
    <property type="entry name" value="A70757"/>
</dbReference>
<dbReference type="RefSeq" id="NP_216503.1">
    <property type="nucleotide sequence ID" value="NC_000962.3"/>
</dbReference>
<dbReference type="RefSeq" id="WP_003409992.1">
    <property type="nucleotide sequence ID" value="NZ_NVQJ01000043.1"/>
</dbReference>
<dbReference type="SMR" id="P9WLQ1"/>
<dbReference type="STRING" id="83332.Rv1987"/>
<dbReference type="PaxDb" id="83332-Rv1987"/>
<dbReference type="DNASU" id="885815"/>
<dbReference type="GeneID" id="885815"/>
<dbReference type="KEGG" id="mtu:Rv1987"/>
<dbReference type="KEGG" id="mtv:RVBD_1987"/>
<dbReference type="TubercuList" id="Rv1987"/>
<dbReference type="eggNOG" id="COG3469">
    <property type="taxonomic scope" value="Bacteria"/>
</dbReference>
<dbReference type="InParanoid" id="P9WLQ1"/>
<dbReference type="OrthoDB" id="5172397at2"/>
<dbReference type="Proteomes" id="UP000001584">
    <property type="component" value="Chromosome"/>
</dbReference>
<dbReference type="GO" id="GO:0005576">
    <property type="term" value="C:extracellular region"/>
    <property type="evidence" value="ECO:0007669"/>
    <property type="project" value="UniProtKB-SubCell"/>
</dbReference>
<dbReference type="GO" id="GO:0005886">
    <property type="term" value="C:plasma membrane"/>
    <property type="evidence" value="ECO:0007669"/>
    <property type="project" value="UniProtKB-SubCell"/>
</dbReference>
<dbReference type="GO" id="GO:0030248">
    <property type="term" value="F:cellulose binding"/>
    <property type="evidence" value="ECO:0000314"/>
    <property type="project" value="MTBBASE"/>
</dbReference>
<dbReference type="GO" id="GO:0004553">
    <property type="term" value="F:hydrolase activity, hydrolyzing O-glycosyl compounds"/>
    <property type="evidence" value="ECO:0007669"/>
    <property type="project" value="InterPro"/>
</dbReference>
<dbReference type="GO" id="GO:0005975">
    <property type="term" value="P:carbohydrate metabolic process"/>
    <property type="evidence" value="ECO:0007669"/>
    <property type="project" value="InterPro"/>
</dbReference>
<dbReference type="Gene3D" id="2.60.40.290">
    <property type="match status" value="1"/>
</dbReference>
<dbReference type="InterPro" id="IPR001919">
    <property type="entry name" value="CBD2"/>
</dbReference>
<dbReference type="InterPro" id="IPR008965">
    <property type="entry name" value="CBM2/CBM3_carb-bd_dom_sf"/>
</dbReference>
<dbReference type="InterPro" id="IPR012291">
    <property type="entry name" value="CBM2_carb-bd_dom_sf"/>
</dbReference>
<dbReference type="Pfam" id="PF00553">
    <property type="entry name" value="CBM_2"/>
    <property type="match status" value="1"/>
</dbReference>
<dbReference type="SMART" id="SM00637">
    <property type="entry name" value="CBD_II"/>
    <property type="match status" value="1"/>
</dbReference>
<dbReference type="SUPFAM" id="SSF49384">
    <property type="entry name" value="Carbohydrate-binding domain"/>
    <property type="match status" value="1"/>
</dbReference>
<dbReference type="PROSITE" id="PS51173">
    <property type="entry name" value="CBM2"/>
    <property type="match status" value="1"/>
</dbReference>
<evidence type="ECO:0000255" key="1"/>
<evidence type="ECO:0000255" key="2">
    <source>
        <dbReference type="PROSITE-ProRule" id="PRU01135"/>
    </source>
</evidence>
<evidence type="ECO:0000269" key="3">
    <source>
    </source>
</evidence>
<evidence type="ECO:0000269" key="4">
    <source>
    </source>
</evidence>
<evidence type="ECO:0000269" key="5">
    <source>
    </source>
</evidence>
<evidence type="ECO:0000269" key="6">
    <source>
    </source>
</evidence>
<evidence type="ECO:0000269" key="7">
    <source>
    </source>
</evidence>
<evidence type="ECO:0000269" key="8">
    <source>
    </source>
</evidence>
<evidence type="ECO:0000303" key="9">
    <source>
    </source>
</evidence>
<evidence type="ECO:0000303" key="10">
    <source>
    </source>
</evidence>
<evidence type="ECO:0000312" key="11">
    <source>
        <dbReference type="EMBL" id="CCP44757.1"/>
    </source>
</evidence>
<name>MCBP_MYCTU</name>
<feature type="signal peptide" evidence="1">
    <location>
        <begin position="1"/>
        <end position="37"/>
    </location>
</feature>
<feature type="chain" id="PRO_0000014114" description="Cellulose/chitin binding protein Rv1987">
    <location>
        <begin position="38"/>
        <end position="142"/>
    </location>
</feature>
<feature type="domain" description="CBM2" evidence="2">
    <location>
        <begin position="38"/>
        <end position="142"/>
    </location>
</feature>
<reference key="1">
    <citation type="journal article" date="1998" name="Nature">
        <title>Deciphering the biology of Mycobacterium tuberculosis from the complete genome sequence.</title>
        <authorList>
            <person name="Cole S.T."/>
            <person name="Brosch R."/>
            <person name="Parkhill J."/>
            <person name="Garnier T."/>
            <person name="Churcher C.M."/>
            <person name="Harris D.E."/>
            <person name="Gordon S.V."/>
            <person name="Eiglmeier K."/>
            <person name="Gas S."/>
            <person name="Barry C.E. III"/>
            <person name="Tekaia F."/>
            <person name="Badcock K."/>
            <person name="Basham D."/>
            <person name="Brown D."/>
            <person name="Chillingworth T."/>
            <person name="Connor R."/>
            <person name="Davies R.M."/>
            <person name="Devlin K."/>
            <person name="Feltwell T."/>
            <person name="Gentles S."/>
            <person name="Hamlin N."/>
            <person name="Holroyd S."/>
            <person name="Hornsby T."/>
            <person name="Jagels K."/>
            <person name="Krogh A."/>
            <person name="McLean J."/>
            <person name="Moule S."/>
            <person name="Murphy L.D."/>
            <person name="Oliver S."/>
            <person name="Osborne J."/>
            <person name="Quail M.A."/>
            <person name="Rajandream M.A."/>
            <person name="Rogers J."/>
            <person name="Rutter S."/>
            <person name="Seeger K."/>
            <person name="Skelton S."/>
            <person name="Squares S."/>
            <person name="Squares R."/>
            <person name="Sulston J.E."/>
            <person name="Taylor K."/>
            <person name="Whitehead S."/>
            <person name="Barrell B.G."/>
        </authorList>
    </citation>
    <scope>NUCLEOTIDE SEQUENCE [LARGE SCALE GENOMIC DNA]</scope>
    <source>
        <strain>ATCC 25618 / H37Rv</strain>
    </source>
</reference>
<reference key="2">
    <citation type="journal article" date="2011" name="Mol. Cell. Proteomics">
        <title>Proteogenomic analysis of Mycobacterium tuberculosis by high resolution mass spectrometry.</title>
        <authorList>
            <person name="Kelkar D.S."/>
            <person name="Kumar D."/>
            <person name="Kumar P."/>
            <person name="Balakrishnan L."/>
            <person name="Muthusamy B."/>
            <person name="Yadav A.K."/>
            <person name="Shrivastava P."/>
            <person name="Marimuthu A."/>
            <person name="Anand S."/>
            <person name="Sundaram H."/>
            <person name="Kingsbury R."/>
            <person name="Harsha H.C."/>
            <person name="Nair B."/>
            <person name="Prasad T.S."/>
            <person name="Chauhan D.S."/>
            <person name="Katoch K."/>
            <person name="Katoch V.M."/>
            <person name="Kumar P."/>
            <person name="Chaerkady R."/>
            <person name="Ramachandran S."/>
            <person name="Dash D."/>
            <person name="Pandey A."/>
        </authorList>
    </citation>
    <scope>IDENTIFICATION BY MASS SPECTROMETRY [LARGE SCALE ANALYSIS]</scope>
    <source>
        <strain>ATCC 25618 / H37Rv</strain>
    </source>
</reference>
<reference key="3">
    <citation type="journal article" date="2011" name="Protein Expr. Purif.">
        <title>Mycobacterium tuberculosis Rv1090 and Rv1987 encode functional beta-glucan-targeting proteins.</title>
        <authorList>
            <person name="Mba Medie F."/>
            <person name="Vincentelli R."/>
            <person name="Drancourt M."/>
            <person name="Henrissat B."/>
        </authorList>
    </citation>
    <scope>FUNCTION</scope>
    <scope>IDENTIFICATION BY MASS SPECTROMETRY</scope>
    <source>
        <strain>H37Rv</strain>
    </source>
</reference>
<reference key="4">
    <citation type="journal article" date="2017" name="Microbiol. Res.">
        <title>Mycobacterium tuberculosis Rv1987 induces Th2 immune responses and enhances Mycobacterium smegmatis survival in mice.</title>
        <authorList>
            <person name="Sha S."/>
            <person name="Shi X."/>
            <person name="Deng G."/>
            <person name="Chen L."/>
            <person name="Xin Y."/>
            <person name="Ma Y."/>
        </authorList>
    </citation>
    <scope>FUNCTION IN VIRULENCE</scope>
    <source>
        <strain>H37Rv</strain>
    </source>
</reference>
<reference key="5">
    <citation type="journal article" date="2021" name="Immunol. Cell Biol.">
        <title>Mycobacterium tuberculosis Rv1987 protein induces M2 polarization of macrophages through activating the PI3K/Akt1/mTOR signaling pathway.</title>
        <authorList>
            <person name="Sha S."/>
            <person name="Shi Y."/>
            <person name="Tang Y."/>
            <person name="Jia L."/>
            <person name="Han X."/>
            <person name="Liu Y."/>
            <person name="Li X."/>
            <person name="Ma Y."/>
        </authorList>
    </citation>
    <scope>FUNCTION IN VIRULENCE</scope>
    <scope>SUBCELLULAR LOCATION</scope>
    <scope>IDENTIFICATION AS A DRUG TARGET</scope>
</reference>
<reference key="6">
    <citation type="journal article" date="2023" name="Appl. Biochem. Biotechnol.">
        <title>An Immunoinformatics-Based Study of Mycobacterium tuberculosis Region of Difference-2 Uncharacterized Protein (Rv1987) as a Potential Subunit Vaccine Candidate for Preliminary Ex Vivo Analysis.</title>
        <authorList>
            <person name="Arega A.M."/>
            <person name="Dhal A.K."/>
            <person name="Pattanaik K.P."/>
            <person name="Nayak S."/>
            <person name="Mahapatra R.K."/>
        </authorList>
    </citation>
    <scope>IDENTIFICATION BY MASS SPECTROMETRY</scope>
    <scope>IDENTIFICATION AS A VACCINE CANDIDATE</scope>
</reference>
<reference key="7">
    <citation type="journal article" date="2023" name="Appl. Biochem. Biotechnol.">
        <authorList>
            <person name="Arega A.M."/>
            <person name="Dhal A.K."/>
            <person name="Pattanaik K.P."/>
            <person name="Nayak S."/>
            <person name="Mahapatra R.K."/>
        </authorList>
    </citation>
    <scope>ERRATUM OF PUBMED:37498378</scope>
</reference>
<reference key="8">
    <citation type="journal article" date="2023" name="Biochem. Biophys. Res. Commun.">
        <title>Secretory protein Rv1987, a 'probable chitinase' from Mycobacterium tuberculosis is a novel chitin and cellulose binding protein lacking enzymatic function.</title>
        <authorList>
            <person name="Prakash C.M."/>
            <person name="Janakiraman V."/>
        </authorList>
    </citation>
    <scope>FUNCTION</scope>
    <scope>SUBCELLULAR LOCATION</scope>
    <source>
        <strain>H37Rv</strain>
    </source>
</reference>
<reference key="9">
    <citation type="journal article" date="2023" name="Front. Cell. Infect. Microbiol.">
        <title>Mycobacterium tuberculosis Rv1987 protein attenuates inflammatory response and consequently alters microbiota in mouse lung.</title>
        <authorList>
            <person name="Liu Y."/>
            <person name="Zhang J."/>
            <person name="Leng G."/>
            <person name="Hu J."/>
            <person name="Wang W."/>
            <person name="Deng G."/>
            <person name="Ma Y."/>
            <person name="Sha S."/>
        </authorList>
    </citation>
    <scope>FUNCTION IN VIRULENCE</scope>
</reference>
<gene>
    <name evidence="9" type="primary">CBD2</name>
    <name evidence="11" type="ordered locus">Rv1987</name>
    <name type="ORF">MTCY39.32c</name>
</gene>
<accession>P9WLQ1</accession>
<accession>L0T8A5</accession>
<accession>P64905</accession>
<accession>Q10870</accession>
<comment type="function">
    <text evidence="3 7">Carbohydrate binding protein that binds chitin and cellulose (PubMed:20826214, PubMed:37879252). Lacks enzymatic activity and does not hydrolyze chitin and cellulose (PubMed:37879252). May interact with mycobacterial biofilms, which are rich in cellulose, and play a role in biofilm formation (PubMed:37879252). Could also act as an adhesin, improving the initial attachment to host cells and aiding M.tuberculosis during the initial stages of infection (PubMed:37879252). Recombinant M.smegmatis harboring Rv1987 shows enhanced cytoadhesion to human lung epithelial cell line A549 (PubMed:37879252).</text>
</comment>
<comment type="function">
    <text evidence="4 5 8">When expressed in M.smegmatis as a model mycobacterium, Rv1987 acts as a virulence factor that modulates host immune responses and contributes to host immune evasion (PubMed:28219528, PubMed:33469941, PubMed:38029253). Can attenuate the inflammatory response induced by mycobacteria and alter lung microbiota composition, leading to the dysbiosis of lung microbiota, which in turn facilitates mycobacterial survival in the host (PubMed:38029253). Infection of murine T-cells with a recombinant M.smegmatis strain overexpressing Rv1987 promotes Th2-biased cytokine responses in mice with lower production of the Th1-type cytokine interferon gamma (IFN-gamma) and higher production of the Th2-type cytokine interleukin-4 (IL-4), which enhances M.smegmatis survival in mouse lungs (PubMed:28219528). Infection of murine macrophages with the M.smegmatis strain overexpressing Rv1987 induces the M2 polarization of alveolar macrophages in mouse lung through activating the PI3K/Akt1/mTOR signaling pathway (PubMed:33469941). The bactericidal ability of these M2 polarized macrophages decreases remarkably, which results in the increased survival of bacteria in macrophages (PubMed:33469941).</text>
</comment>
<comment type="subcellular location">
    <subcellularLocation>
        <location evidence="7">Secreted</location>
    </subcellularLocation>
    <subcellularLocation>
        <location evidence="5 7">Secreted</location>
        <location evidence="5 7">Cell wall</location>
    </subcellularLocation>
    <subcellularLocation>
        <location evidence="5 7">Cell membrane</location>
    </subcellularLocation>
</comment>
<comment type="miscellaneous">
    <text evidence="5 6">Identified as a drug target (PubMed:33469941). Also identified as a potential subunit vaccine candidate through a systemic immunoinformatics approach (PubMed:37498378). Rv1987 exhibits a strong potential immunogenic response useful for the development of a tuberculosis vaccine that would be used in tuberculosis models to generate humoral and cellular immunities (PubMed:37498378).</text>
</comment>